<comment type="function">
    <text evidence="1">Component of the tagatose-1,6-bisphosphate aldolase KbaYZ that is required for full activity and stability of the Y subunit. Could have a chaperone-like function for the proper and stable folding of KbaY. When expressed alone, KbaZ does not show any aldolase activity.</text>
</comment>
<comment type="pathway">
    <text evidence="1">Carbohydrate metabolism; D-tagatose 6-phosphate degradation; D-glyceraldehyde 3-phosphate and glycerone phosphate from D-tagatose 6-phosphate: step 2/2.</text>
</comment>
<comment type="subunit">
    <text evidence="1">Forms a complex with KbaY.</text>
</comment>
<comment type="similarity">
    <text evidence="1">Belongs to the GatZ/KbaZ family. KbaZ subfamily.</text>
</comment>
<evidence type="ECO:0000255" key="1">
    <source>
        <dbReference type="HAMAP-Rule" id="MF_01295"/>
    </source>
</evidence>
<accession>A7ZS26</accession>
<protein>
    <recommendedName>
        <fullName evidence="1">D-tagatose-1,6-bisphosphate aldolase subunit KbaZ</fullName>
    </recommendedName>
</protein>
<reference key="1">
    <citation type="journal article" date="2008" name="J. Bacteriol.">
        <title>The pangenome structure of Escherichia coli: comparative genomic analysis of E. coli commensal and pathogenic isolates.</title>
        <authorList>
            <person name="Rasko D.A."/>
            <person name="Rosovitz M.J."/>
            <person name="Myers G.S.A."/>
            <person name="Mongodin E.F."/>
            <person name="Fricke W.F."/>
            <person name="Gajer P."/>
            <person name="Crabtree J."/>
            <person name="Sebaihia M."/>
            <person name="Thomson N.R."/>
            <person name="Chaudhuri R."/>
            <person name="Henderson I.R."/>
            <person name="Sperandio V."/>
            <person name="Ravel J."/>
        </authorList>
    </citation>
    <scope>NUCLEOTIDE SEQUENCE [LARGE SCALE GENOMIC DNA]</scope>
    <source>
        <strain>E24377A / ETEC</strain>
    </source>
</reference>
<keyword id="KW-1185">Reference proteome</keyword>
<name>KBAZ_ECO24</name>
<sequence>MKHLTEMVRQHKAGKTNGIYAVCSAHPLVLEAAIRYASANQTPLLIEATSNQVDQFGGYTGMTPADFRGFVCQLAESLNFPQDALILGGDHLGPNRWQNLPAAQAMANADDLIKSYVAAGFKKIHLDCSMSCQDDPIPLTDDIVAERAARLAKVAEETCLEHFGEADLEYVIGTEVPVPGGAHETLSELAVTTPDAARATLEAHRHAFEKQGLNAIWPRIIALVVQPGVEFDHTNVIDYQPAKASALSQMVENYETLIFEAHSTDYQTPQSLRQLVIDHFAILKVGPALTFALREALFSLAAIEEELVPAKACSGLRQVLEDVMLDRPEYWQSHYHGDGNARRLARGYSYSDRVRYYWPDSQIDDAFAHLVRNLADSPIPLPLISQYLPLQYVKVRSGELQPTPRELIINHIQDILAQYHTACEGQ</sequence>
<proteinExistence type="inferred from homology"/>
<feature type="chain" id="PRO_0000372531" description="D-tagatose-1,6-bisphosphate aldolase subunit KbaZ">
    <location>
        <begin position="1"/>
        <end position="426"/>
    </location>
</feature>
<organism>
    <name type="scientific">Escherichia coli O139:H28 (strain E24377A / ETEC)</name>
    <dbReference type="NCBI Taxonomy" id="331111"/>
    <lineage>
        <taxon>Bacteria</taxon>
        <taxon>Pseudomonadati</taxon>
        <taxon>Pseudomonadota</taxon>
        <taxon>Gammaproteobacteria</taxon>
        <taxon>Enterobacterales</taxon>
        <taxon>Enterobacteriaceae</taxon>
        <taxon>Escherichia</taxon>
    </lineage>
</organism>
<dbReference type="EMBL" id="CP000800">
    <property type="protein sequence ID" value="ABV20980.1"/>
    <property type="molecule type" value="Genomic_DNA"/>
</dbReference>
<dbReference type="RefSeq" id="WP_000681947.1">
    <property type="nucleotide sequence ID" value="NC_009801.1"/>
</dbReference>
<dbReference type="SMR" id="A7ZS26"/>
<dbReference type="GeneID" id="75203752"/>
<dbReference type="KEGG" id="ecw:EcE24377A_3612"/>
<dbReference type="HOGENOM" id="CLU_053334_0_0_6"/>
<dbReference type="UniPathway" id="UPA00704">
    <property type="reaction ID" value="UER00716"/>
</dbReference>
<dbReference type="Proteomes" id="UP000001122">
    <property type="component" value="Chromosome"/>
</dbReference>
<dbReference type="GO" id="GO:0005886">
    <property type="term" value="C:plasma membrane"/>
    <property type="evidence" value="ECO:0007669"/>
    <property type="project" value="TreeGrafter"/>
</dbReference>
<dbReference type="GO" id="GO:0005975">
    <property type="term" value="P:carbohydrate metabolic process"/>
    <property type="evidence" value="ECO:0007669"/>
    <property type="project" value="InterPro"/>
</dbReference>
<dbReference type="GO" id="GO:2001059">
    <property type="term" value="P:D-tagatose 6-phosphate catabolic process"/>
    <property type="evidence" value="ECO:0007669"/>
    <property type="project" value="UniProtKB-UniRule"/>
</dbReference>
<dbReference type="GO" id="GO:0009401">
    <property type="term" value="P:phosphoenolpyruvate-dependent sugar phosphotransferase system"/>
    <property type="evidence" value="ECO:0007669"/>
    <property type="project" value="TreeGrafter"/>
</dbReference>
<dbReference type="Gene3D" id="3.20.20.70">
    <property type="entry name" value="Aldolase class I"/>
    <property type="match status" value="1"/>
</dbReference>
<dbReference type="Gene3D" id="1.10.400.20">
    <property type="entry name" value="putative tagatose 6-phosphate kinase domain like"/>
    <property type="match status" value="1"/>
</dbReference>
<dbReference type="HAMAP" id="MF_01295">
    <property type="entry name" value="Tagatose_aldol_KbaZ"/>
    <property type="match status" value="1"/>
</dbReference>
<dbReference type="InterPro" id="IPR013785">
    <property type="entry name" value="Aldolase_TIM"/>
</dbReference>
<dbReference type="InterPro" id="IPR012062">
    <property type="entry name" value="GatZ/KbaZ-like"/>
</dbReference>
<dbReference type="InterPro" id="IPR050303">
    <property type="entry name" value="GatZ_KbaZ_carbometab"/>
</dbReference>
<dbReference type="InterPro" id="IPR023435">
    <property type="entry name" value="TagBP_ald_KbaZ"/>
</dbReference>
<dbReference type="NCBIfam" id="TIGR02810">
    <property type="entry name" value="agaZ_gatZ"/>
    <property type="match status" value="1"/>
</dbReference>
<dbReference type="NCBIfam" id="NF012002">
    <property type="entry name" value="PRK15458.1"/>
    <property type="match status" value="1"/>
</dbReference>
<dbReference type="PANTHER" id="PTHR32502:SF2">
    <property type="entry name" value="D-TAGATOSE-1,6-BISPHOSPHATE ALDOLASE SUBUNIT KBAZ"/>
    <property type="match status" value="1"/>
</dbReference>
<dbReference type="PANTHER" id="PTHR32502">
    <property type="entry name" value="N-ACETYLGALACTOSAMINE PERMEASE II COMPONENT-RELATED"/>
    <property type="match status" value="1"/>
</dbReference>
<dbReference type="Pfam" id="PF08013">
    <property type="entry name" value="GatZ_KbaZ-like"/>
    <property type="match status" value="1"/>
</dbReference>
<dbReference type="PIRSF" id="PIRSF009264">
    <property type="entry name" value="TagBP_ald_AgaZ"/>
    <property type="match status" value="1"/>
</dbReference>
<dbReference type="SUPFAM" id="SSF51569">
    <property type="entry name" value="Aldolase"/>
    <property type="match status" value="1"/>
</dbReference>
<gene>
    <name evidence="1" type="primary">kbaZ</name>
    <name type="ordered locus">EcE24377A_3612</name>
</gene>